<protein>
    <recommendedName>
        <fullName>Signal peptidase complex catalytic subunit sec11</fullName>
        <ecNumber evidence="1">3.4.21.89</ecNumber>
    </recommendedName>
    <alternativeName>
        <fullName>Signal peptidase I</fullName>
    </alternativeName>
</protein>
<gene>
    <name type="primary">sec11</name>
    <name type="ORF">NFIA_064460</name>
</gene>
<reference key="1">
    <citation type="journal article" date="2008" name="PLoS Genet.">
        <title>Genomic islands in the pathogenic filamentous fungus Aspergillus fumigatus.</title>
        <authorList>
            <person name="Fedorova N.D."/>
            <person name="Khaldi N."/>
            <person name="Joardar V.S."/>
            <person name="Maiti R."/>
            <person name="Amedeo P."/>
            <person name="Anderson M.J."/>
            <person name="Crabtree J."/>
            <person name="Silva J.C."/>
            <person name="Badger J.H."/>
            <person name="Albarraq A."/>
            <person name="Angiuoli S."/>
            <person name="Bussey H."/>
            <person name="Bowyer P."/>
            <person name="Cotty P.J."/>
            <person name="Dyer P.S."/>
            <person name="Egan A."/>
            <person name="Galens K."/>
            <person name="Fraser-Liggett C.M."/>
            <person name="Haas B.J."/>
            <person name="Inman J.M."/>
            <person name="Kent R."/>
            <person name="Lemieux S."/>
            <person name="Malavazi I."/>
            <person name="Orvis J."/>
            <person name="Roemer T."/>
            <person name="Ronning C.M."/>
            <person name="Sundaram J.P."/>
            <person name="Sutton G."/>
            <person name="Turner G."/>
            <person name="Venter J.C."/>
            <person name="White O.R."/>
            <person name="Whitty B.R."/>
            <person name="Youngman P."/>
            <person name="Wolfe K.H."/>
            <person name="Goldman G.H."/>
            <person name="Wortman J.R."/>
            <person name="Jiang B."/>
            <person name="Denning D.W."/>
            <person name="Nierman W.C."/>
        </authorList>
    </citation>
    <scope>NUCLEOTIDE SEQUENCE [LARGE SCALE GENOMIC DNA]</scope>
    <source>
        <strain>ATCC 1020 / DSM 3700 / CBS 544.65 / FGSC A1164 / JCM 1740 / NRRL 181 / WB 181</strain>
    </source>
</reference>
<organism>
    <name type="scientific">Neosartorya fischeri (strain ATCC 1020 / DSM 3700 / CBS 544.65 / FGSC A1164 / JCM 1740 / NRRL 181 / WB 181)</name>
    <name type="common">Aspergillus fischerianus</name>
    <dbReference type="NCBI Taxonomy" id="331117"/>
    <lineage>
        <taxon>Eukaryota</taxon>
        <taxon>Fungi</taxon>
        <taxon>Dikarya</taxon>
        <taxon>Ascomycota</taxon>
        <taxon>Pezizomycotina</taxon>
        <taxon>Eurotiomycetes</taxon>
        <taxon>Eurotiomycetidae</taxon>
        <taxon>Eurotiales</taxon>
        <taxon>Aspergillaceae</taxon>
        <taxon>Aspergillus</taxon>
        <taxon>Aspergillus subgen. Fumigati</taxon>
    </lineage>
</organism>
<evidence type="ECO:0000250" key="1">
    <source>
        <dbReference type="UniProtKB" id="P15367"/>
    </source>
</evidence>
<evidence type="ECO:0000250" key="2">
    <source>
        <dbReference type="UniProtKB" id="P67812"/>
    </source>
</evidence>
<evidence type="ECO:0000255" key="3"/>
<evidence type="ECO:0000305" key="4"/>
<dbReference type="EC" id="3.4.21.89" evidence="1"/>
<dbReference type="EMBL" id="DS027690">
    <property type="protein sequence ID" value="EAW21282.1"/>
    <property type="molecule type" value="Genomic_DNA"/>
</dbReference>
<dbReference type="RefSeq" id="XP_001263179.1">
    <property type="nucleotide sequence ID" value="XM_001263178.1"/>
</dbReference>
<dbReference type="SMR" id="A1D6D8"/>
<dbReference type="STRING" id="331117.A1D6D8"/>
<dbReference type="MEROPS" id="S26.010"/>
<dbReference type="EnsemblFungi" id="EAW21282">
    <property type="protein sequence ID" value="EAW21282"/>
    <property type="gene ID" value="NFIA_064460"/>
</dbReference>
<dbReference type="GeneID" id="4589743"/>
<dbReference type="KEGG" id="nfi:NFIA_064460"/>
<dbReference type="VEuPathDB" id="FungiDB:NFIA_064460"/>
<dbReference type="eggNOG" id="KOG3342">
    <property type="taxonomic scope" value="Eukaryota"/>
</dbReference>
<dbReference type="HOGENOM" id="CLU_089996_0_0_1"/>
<dbReference type="OMA" id="ILMNEYP"/>
<dbReference type="OrthoDB" id="10257561at2759"/>
<dbReference type="Proteomes" id="UP000006702">
    <property type="component" value="Unassembled WGS sequence"/>
</dbReference>
<dbReference type="GO" id="GO:0005787">
    <property type="term" value="C:signal peptidase complex"/>
    <property type="evidence" value="ECO:0007669"/>
    <property type="project" value="EnsemblFungi"/>
</dbReference>
<dbReference type="GO" id="GO:0004252">
    <property type="term" value="F:serine-type endopeptidase activity"/>
    <property type="evidence" value="ECO:0007669"/>
    <property type="project" value="UniProtKB-EC"/>
</dbReference>
<dbReference type="GO" id="GO:0045047">
    <property type="term" value="P:protein targeting to ER"/>
    <property type="evidence" value="ECO:0007669"/>
    <property type="project" value="EnsemblFungi"/>
</dbReference>
<dbReference type="GO" id="GO:0006465">
    <property type="term" value="P:signal peptide processing"/>
    <property type="evidence" value="ECO:0007669"/>
    <property type="project" value="EnsemblFungi"/>
</dbReference>
<dbReference type="CDD" id="cd06530">
    <property type="entry name" value="S26_SPase_I"/>
    <property type="match status" value="1"/>
</dbReference>
<dbReference type="InterPro" id="IPR036286">
    <property type="entry name" value="LexA/Signal_pep-like_sf"/>
</dbReference>
<dbReference type="InterPro" id="IPR019756">
    <property type="entry name" value="Pept_S26A_signal_pept_1_Ser-AS"/>
</dbReference>
<dbReference type="InterPro" id="IPR019533">
    <property type="entry name" value="Peptidase_S26"/>
</dbReference>
<dbReference type="InterPro" id="IPR001733">
    <property type="entry name" value="Peptidase_S26B"/>
</dbReference>
<dbReference type="NCBIfam" id="TIGR02228">
    <property type="entry name" value="sigpep_I_arch"/>
    <property type="match status" value="1"/>
</dbReference>
<dbReference type="PANTHER" id="PTHR10806">
    <property type="entry name" value="SIGNAL PEPTIDASE COMPLEX CATALYTIC SUBUNIT SEC11"/>
    <property type="match status" value="1"/>
</dbReference>
<dbReference type="PANTHER" id="PTHR10806:SF6">
    <property type="entry name" value="SIGNAL PEPTIDASE COMPLEX CATALYTIC SUBUNIT SEC11"/>
    <property type="match status" value="1"/>
</dbReference>
<dbReference type="PRINTS" id="PR00728">
    <property type="entry name" value="SIGNALPTASE"/>
</dbReference>
<dbReference type="SUPFAM" id="SSF51306">
    <property type="entry name" value="LexA/Signal peptidase"/>
    <property type="match status" value="1"/>
</dbReference>
<dbReference type="PROSITE" id="PS00501">
    <property type="entry name" value="SPASE_I_1"/>
    <property type="match status" value="1"/>
</dbReference>
<proteinExistence type="inferred from homology"/>
<sequence>MLSFLSSNLSSTRQSLAQVLNFALVLSTAFMLWKGLSVFTASSSPIVVVLSGSMEPAFQRGDLLFLWNRSPRAELGEIVVYNVRGKDIPIVHRVVRTFPQIEGKAKKVKEVTEASSVPPNMLLTKGDNNIADDTELYAKNQDFLHREEDIVGSVRGYMPMVGYVTIMLSEHPWLKTVLLGIMGLMVILQREQ</sequence>
<accession>A1D6D8</accession>
<comment type="function">
    <text evidence="1 2">Catalytic component of the signal peptidase complex (SPC) which catalyzes the cleavage of N-terminal signal sequences from nascent proteins as they are translocated into the lumen of the endoplasmic reticulum (By similarity). Specifically cleaves N-terminal signal peptides that contain a hydrophobic alpha-helix (h-region) shorter than 18-20 amino acids (By similarity).</text>
</comment>
<comment type="catalytic activity">
    <reaction evidence="1">
        <text>Cleavage of hydrophobic, N-terminal signal or leader sequences from secreted and periplasmic proteins.</text>
        <dbReference type="EC" id="3.4.21.89"/>
    </reaction>
</comment>
<comment type="subunit">
    <text evidence="1 2">Component of the signal peptidase complex (SPC) composed of a catalytic subunit SEC11 and three accessory subunits SPC1, SPC2 and SPC3 (By similarity). The complex induces a local thinning of the ER membrane which is used to measure the length of the signal peptide (SP) h-region of protein substrates. This ensures the selectivity of the complex towards h-regions shorter than 18-20 amino acids (By similarity). SPC associates with the translocon complex (By similarity).</text>
</comment>
<comment type="subcellular location">
    <subcellularLocation>
        <location evidence="1">Endoplasmic reticulum membrane</location>
        <topology evidence="1">Single-pass type II membrane protein</topology>
    </subcellularLocation>
</comment>
<comment type="domain">
    <text evidence="2">The C-terminal short (CTS) helix is essential for catalytic activity. It may be accommodated as a transmembrane helix in the thinned membrane environment of the complex, similarly to the signal peptide in the complex substrates.</text>
</comment>
<comment type="similarity">
    <text evidence="4">Belongs to the peptidase S26B family.</text>
</comment>
<feature type="chain" id="PRO_0000412341" description="Signal peptidase complex catalytic subunit sec11">
    <location>
        <begin position="1"/>
        <end position="192"/>
    </location>
</feature>
<feature type="topological domain" description="Cytoplasmic" evidence="3">
    <location>
        <begin position="1"/>
        <end position="18"/>
    </location>
</feature>
<feature type="transmembrane region" description="Helical; Signal-anchor for type II membrane protein" evidence="3">
    <location>
        <begin position="19"/>
        <end position="39"/>
    </location>
</feature>
<feature type="topological domain" description="Lumenal" evidence="3">
    <location>
        <begin position="40"/>
        <end position="192"/>
    </location>
</feature>
<feature type="region of interest" description="C-terminal short (CTS) helix" evidence="2">
    <location>
        <begin position="177"/>
        <end position="188"/>
    </location>
</feature>
<feature type="active site" description="Charge relay system" evidence="1">
    <location>
        <position position="53"/>
    </location>
</feature>
<feature type="active site" description="Charge relay system" evidence="1">
    <location>
        <position position="92"/>
    </location>
</feature>
<feature type="active site" description="Charge relay system" evidence="1">
    <location>
        <position position="133"/>
    </location>
</feature>
<name>SEC11_NEOFI</name>
<keyword id="KW-0256">Endoplasmic reticulum</keyword>
<keyword id="KW-0378">Hydrolase</keyword>
<keyword id="KW-0472">Membrane</keyword>
<keyword id="KW-0645">Protease</keyword>
<keyword id="KW-1185">Reference proteome</keyword>
<keyword id="KW-0735">Signal-anchor</keyword>
<keyword id="KW-0812">Transmembrane</keyword>
<keyword id="KW-1133">Transmembrane helix</keyword>